<keyword id="KW-0255">Endonuclease</keyword>
<keyword id="KW-0378">Hydrolase</keyword>
<keyword id="KW-0540">Nuclease</keyword>
<keyword id="KW-0694">RNA-binding</keyword>
<keyword id="KW-0819">tRNA processing</keyword>
<feature type="chain" id="PRO_0000198556" description="Ribonuclease P protein component">
    <location>
        <begin position="1"/>
        <end position="151"/>
    </location>
</feature>
<feature type="region of interest" description="Disordered" evidence="2">
    <location>
        <begin position="1"/>
        <end position="62"/>
    </location>
</feature>
<feature type="compositionally biased region" description="Low complexity" evidence="2">
    <location>
        <begin position="28"/>
        <end position="48"/>
    </location>
</feature>
<reference key="1">
    <citation type="journal article" date="2003" name="Proc. Natl. Acad. Sci. U.S.A.">
        <title>An unusual mechanism of bacterial gene expression revealed for the RNase P protein of Thermus strains.</title>
        <authorList>
            <person name="Feltens R."/>
            <person name="Gossringer M."/>
            <person name="Willkomm D.K."/>
            <person name="Urlaub H."/>
            <person name="Hartmann R.K."/>
        </authorList>
    </citation>
    <scope>NUCLEOTIDE SEQUENCE [GENOMIC DNA]</scope>
    <source>
        <strain>SPS8</strain>
    </source>
</reference>
<sequence>MDEKDLATQPQETGQDPRLPGQDAHPRGAQGAEAQAAEGPLAAHAQGAPLKSLKGDSAFRRLRQGRTGRGRYVTVRWLPAPELRVGIVVSKKVGKTVVRNRVKRRLREILRRLHLPRAHLLLVATPEAREAGFAELFQDLTRALKKSGLVQ</sequence>
<dbReference type="EC" id="3.1.26.5" evidence="1"/>
<dbReference type="EMBL" id="AY256340">
    <property type="protein sequence ID" value="AAO88973.1"/>
    <property type="molecule type" value="Genomic_DNA"/>
</dbReference>
<dbReference type="SMR" id="Q7X5L0"/>
<dbReference type="GO" id="GO:0030677">
    <property type="term" value="C:ribonuclease P complex"/>
    <property type="evidence" value="ECO:0007669"/>
    <property type="project" value="TreeGrafter"/>
</dbReference>
<dbReference type="GO" id="GO:0042781">
    <property type="term" value="F:3'-tRNA processing endoribonuclease activity"/>
    <property type="evidence" value="ECO:0007669"/>
    <property type="project" value="TreeGrafter"/>
</dbReference>
<dbReference type="GO" id="GO:0004526">
    <property type="term" value="F:ribonuclease P activity"/>
    <property type="evidence" value="ECO:0007669"/>
    <property type="project" value="UniProtKB-UniRule"/>
</dbReference>
<dbReference type="GO" id="GO:0000049">
    <property type="term" value="F:tRNA binding"/>
    <property type="evidence" value="ECO:0007669"/>
    <property type="project" value="UniProtKB-UniRule"/>
</dbReference>
<dbReference type="GO" id="GO:0001682">
    <property type="term" value="P:tRNA 5'-leader removal"/>
    <property type="evidence" value="ECO:0007669"/>
    <property type="project" value="UniProtKB-UniRule"/>
</dbReference>
<dbReference type="Gene3D" id="3.30.230.10">
    <property type="match status" value="1"/>
</dbReference>
<dbReference type="HAMAP" id="MF_00227">
    <property type="entry name" value="RNase_P"/>
    <property type="match status" value="1"/>
</dbReference>
<dbReference type="InterPro" id="IPR020568">
    <property type="entry name" value="Ribosomal_Su5_D2-typ_SF"/>
</dbReference>
<dbReference type="InterPro" id="IPR014721">
    <property type="entry name" value="Ribsml_uS5_D2-typ_fold_subgr"/>
</dbReference>
<dbReference type="InterPro" id="IPR000100">
    <property type="entry name" value="RNase_P"/>
</dbReference>
<dbReference type="NCBIfam" id="TIGR00188">
    <property type="entry name" value="rnpA"/>
    <property type="match status" value="1"/>
</dbReference>
<dbReference type="PANTHER" id="PTHR33992">
    <property type="entry name" value="RIBONUCLEASE P PROTEIN COMPONENT"/>
    <property type="match status" value="1"/>
</dbReference>
<dbReference type="PANTHER" id="PTHR33992:SF1">
    <property type="entry name" value="RIBONUCLEASE P PROTEIN COMPONENT"/>
    <property type="match status" value="1"/>
</dbReference>
<dbReference type="Pfam" id="PF00825">
    <property type="entry name" value="Ribonuclease_P"/>
    <property type="match status" value="1"/>
</dbReference>
<dbReference type="SUPFAM" id="SSF54211">
    <property type="entry name" value="Ribosomal protein S5 domain 2-like"/>
    <property type="match status" value="1"/>
</dbReference>
<organism>
    <name type="scientific">Thermus oshimai</name>
    <dbReference type="NCBI Taxonomy" id="56957"/>
    <lineage>
        <taxon>Bacteria</taxon>
        <taxon>Thermotogati</taxon>
        <taxon>Deinococcota</taxon>
        <taxon>Deinococci</taxon>
        <taxon>Thermales</taxon>
        <taxon>Thermaceae</taxon>
        <taxon>Thermus</taxon>
    </lineage>
</organism>
<comment type="function">
    <text evidence="1">RNaseP catalyzes the removal of the 5'-leader sequence from pre-tRNA to produce the mature 5'-terminus. It can also cleave other RNA substrates such as 4.5S RNA. The protein component plays an auxiliary but essential role in vivo by binding to the 5'-leader sequence and broadening the substrate specificity of the ribozyme.</text>
</comment>
<comment type="catalytic activity">
    <reaction evidence="1">
        <text>Endonucleolytic cleavage of RNA, removing 5'-extranucleotides from tRNA precursor.</text>
        <dbReference type="EC" id="3.1.26.5"/>
    </reaction>
</comment>
<comment type="subunit">
    <text evidence="1">Consists of a catalytic RNA component (M1 or rnpB) and a protein subunit.</text>
</comment>
<comment type="miscellaneous">
    <text>The open reading frame (ORF) for this protein entirely encompasses the ORF for the 50S ribosomal protein L34 (rpmH). The two start codons are separated by four nucleotides.</text>
</comment>
<comment type="similarity">
    <text evidence="1">Belongs to the RnpA family.</text>
</comment>
<name>RNPA_THEOS</name>
<evidence type="ECO:0000255" key="1">
    <source>
        <dbReference type="HAMAP-Rule" id="MF_00227"/>
    </source>
</evidence>
<evidence type="ECO:0000256" key="2">
    <source>
        <dbReference type="SAM" id="MobiDB-lite"/>
    </source>
</evidence>
<accession>Q7X5L0</accession>
<protein>
    <recommendedName>
        <fullName evidence="1">Ribonuclease P protein component</fullName>
        <shortName evidence="1">RNase P protein</shortName>
        <shortName evidence="1">RNaseP protein</shortName>
        <ecNumber evidence="1">3.1.26.5</ecNumber>
    </recommendedName>
    <alternativeName>
        <fullName evidence="1">Protein C5</fullName>
    </alternativeName>
</protein>
<gene>
    <name evidence="1" type="primary">rnpA</name>
</gene>
<proteinExistence type="inferred from homology"/>